<feature type="chain" id="PRO_0000074493" description="Na(+)-translocating NADH-quinone reductase subunit F">
    <location>
        <begin position="1" status="less than"/>
        <end position="303" status="greater than"/>
    </location>
</feature>
<feature type="domain" description="2Fe-2S ferredoxin-type" evidence="3">
    <location>
        <begin position="1" status="less than"/>
        <end position="45"/>
    </location>
</feature>
<feature type="domain" description="FAD-binding FR-type" evidence="4">
    <location>
        <begin position="58"/>
        <end position="198"/>
    </location>
</feature>
<feature type="region of interest" description="Catalytic">
    <location>
        <begin position="201"/>
        <end position="303" status="greater than"/>
    </location>
</feature>
<feature type="binding site" evidence="3">
    <location>
        <position position="4"/>
    </location>
    <ligand>
        <name>[2Fe-2S] cluster</name>
        <dbReference type="ChEBI" id="CHEBI:190135"/>
    </ligand>
</feature>
<feature type="binding site" evidence="3">
    <location>
        <position position="7"/>
    </location>
    <ligand>
        <name>[2Fe-2S] cluster</name>
        <dbReference type="ChEBI" id="CHEBI:190135"/>
    </ligand>
</feature>
<feature type="binding site" evidence="3">
    <location>
        <position position="39"/>
    </location>
    <ligand>
        <name>[2Fe-2S] cluster</name>
        <dbReference type="ChEBI" id="CHEBI:190135"/>
    </ligand>
</feature>
<feature type="non-terminal residue">
    <location>
        <position position="1"/>
    </location>
</feature>
<feature type="non-terminal residue">
    <location>
        <position position="303"/>
    </location>
</feature>
<gene>
    <name type="primary">nqrF</name>
    <name type="synonym">nqr6</name>
</gene>
<evidence type="ECO:0000250" key="1">
    <source>
        <dbReference type="UniProtKB" id="A5F5Y4"/>
    </source>
</evidence>
<evidence type="ECO:0000250" key="2">
    <source>
        <dbReference type="UniProtKB" id="Q56584"/>
    </source>
</evidence>
<evidence type="ECO:0000255" key="3">
    <source>
        <dbReference type="PROSITE-ProRule" id="PRU00465"/>
    </source>
</evidence>
<evidence type="ECO:0000255" key="4">
    <source>
        <dbReference type="PROSITE-ProRule" id="PRU00716"/>
    </source>
</evidence>
<evidence type="ECO:0000305" key="5"/>
<proteinExistence type="inferred from homology"/>
<protein>
    <recommendedName>
        <fullName>Na(+)-translocating NADH-quinone reductase subunit F</fullName>
        <shortName>Na(+)-NQR subunit F</shortName>
        <shortName>Na(+)-translocating NQR subunit F</shortName>
        <ecNumber evidence="2">7.2.1.1</ecNumber>
    </recommendedName>
    <alternativeName>
        <fullName>NQR complex subunit F</fullName>
    </alternativeName>
    <alternativeName>
        <fullName>NQR-1 subunit F</fullName>
    </alternativeName>
</protein>
<accession>Q9K3E1</accession>
<sequence>GGSCGQCRVEVHSGGGDILPTEEGHINKREAKSGCRLACQVAVKQDMEIEVEDEIFGVQQWECEVISNDNKATFIKELKLQIPNGESVPFKAGGYIQIEAPAHHVKYSDFEIDEQYRGDWKHFGFFDVESKVDTDTLRAYSMANYPEEEGIIMLNVRIATPPPGRLHLPAGKMSSYIFSLKAGDKVTISGPFGEFFAKETDNEMVFIGGGAGMAPMRSHIFDQLKRLHSKRKMSFWYGARSKREMFYEDDYNGLAADNDNFQWHVALSDPQPEDNWDGLTGFIHNVLFEEYLKDHEAPEDCEY</sequence>
<reference key="1">
    <citation type="journal article" date="2000" name="Can. J. Microbiol.">
        <title>Detection of the Na(+)-translocating NADH-quinone reductase in marine bacteria using a PCR technique.</title>
        <authorList>
            <person name="Kato S."/>
            <person name="Yumoto I."/>
        </authorList>
    </citation>
    <scope>NUCLEOTIDE SEQUENCE [GENOMIC DNA]</scope>
    <source>
        <strain>DSM 16033 / CIP 106458 / JCM 10085 / ABE-1</strain>
    </source>
</reference>
<keyword id="KW-0001">2Fe-2S</keyword>
<keyword id="KW-0997">Cell inner membrane</keyword>
<keyword id="KW-1003">Cell membrane</keyword>
<keyword id="KW-0274">FAD</keyword>
<keyword id="KW-0285">Flavoprotein</keyword>
<keyword id="KW-0406">Ion transport</keyword>
<keyword id="KW-0408">Iron</keyword>
<keyword id="KW-0411">Iron-sulfur</keyword>
<keyword id="KW-0472">Membrane</keyword>
<keyword id="KW-0479">Metal-binding</keyword>
<keyword id="KW-0520">NAD</keyword>
<keyword id="KW-0915">Sodium</keyword>
<keyword id="KW-0739">Sodium transport</keyword>
<keyword id="KW-1278">Translocase</keyword>
<keyword id="KW-0813">Transport</keyword>
<keyword id="KW-0830">Ubiquinone</keyword>
<organism>
    <name type="scientific">Colwellia maris</name>
    <dbReference type="NCBI Taxonomy" id="77524"/>
    <lineage>
        <taxon>Bacteria</taxon>
        <taxon>Pseudomonadati</taxon>
        <taxon>Pseudomonadota</taxon>
        <taxon>Gammaproteobacteria</taxon>
        <taxon>Alteromonadales</taxon>
        <taxon>Colwelliaceae</taxon>
        <taxon>Colwellia</taxon>
    </lineage>
</organism>
<dbReference type="EC" id="7.2.1.1" evidence="2"/>
<dbReference type="EMBL" id="AB024722">
    <property type="protein sequence ID" value="BAA83759.1"/>
    <property type="molecule type" value="Genomic_DNA"/>
</dbReference>
<dbReference type="SMR" id="Q9K3E1"/>
<dbReference type="GO" id="GO:0005886">
    <property type="term" value="C:plasma membrane"/>
    <property type="evidence" value="ECO:0007669"/>
    <property type="project" value="UniProtKB-SubCell"/>
</dbReference>
<dbReference type="GO" id="GO:0051537">
    <property type="term" value="F:2 iron, 2 sulfur cluster binding"/>
    <property type="evidence" value="ECO:0007669"/>
    <property type="project" value="UniProtKB-KW"/>
</dbReference>
<dbReference type="GO" id="GO:0046872">
    <property type="term" value="F:metal ion binding"/>
    <property type="evidence" value="ECO:0007669"/>
    <property type="project" value="UniProtKB-KW"/>
</dbReference>
<dbReference type="GO" id="GO:0016655">
    <property type="term" value="F:oxidoreductase activity, acting on NAD(P)H, quinone or similar compound as acceptor"/>
    <property type="evidence" value="ECO:0007669"/>
    <property type="project" value="InterPro"/>
</dbReference>
<dbReference type="GO" id="GO:0006814">
    <property type="term" value="P:sodium ion transport"/>
    <property type="evidence" value="ECO:0007669"/>
    <property type="project" value="UniProtKB-KW"/>
</dbReference>
<dbReference type="CDD" id="cd00207">
    <property type="entry name" value="fer2"/>
    <property type="match status" value="1"/>
</dbReference>
<dbReference type="CDD" id="cd06188">
    <property type="entry name" value="NADH_quinone_reductase"/>
    <property type="match status" value="1"/>
</dbReference>
<dbReference type="FunFam" id="2.40.30.10:FF:000064">
    <property type="entry name" value="Na(+)-translocating NADH-quinone reductase subunit F"/>
    <property type="match status" value="1"/>
</dbReference>
<dbReference type="FunFam" id="3.40.50.80:FF:000014">
    <property type="entry name" value="Na(+)-translocating NADH-quinone reductase subunit F"/>
    <property type="match status" value="1"/>
</dbReference>
<dbReference type="Gene3D" id="3.10.20.30">
    <property type="match status" value="1"/>
</dbReference>
<dbReference type="Gene3D" id="3.40.50.80">
    <property type="entry name" value="Nucleotide-binding domain of ferredoxin-NADP reductase (FNR) module"/>
    <property type="match status" value="1"/>
</dbReference>
<dbReference type="Gene3D" id="2.40.30.10">
    <property type="entry name" value="Translation factors"/>
    <property type="match status" value="1"/>
</dbReference>
<dbReference type="InterPro" id="IPR036010">
    <property type="entry name" value="2Fe-2S_ferredoxin-like_sf"/>
</dbReference>
<dbReference type="InterPro" id="IPR001041">
    <property type="entry name" value="2Fe-2S_ferredoxin-type"/>
</dbReference>
<dbReference type="InterPro" id="IPR012675">
    <property type="entry name" value="Beta-grasp_dom_sf"/>
</dbReference>
<dbReference type="InterPro" id="IPR008333">
    <property type="entry name" value="Cbr1-like_FAD-bd_dom"/>
</dbReference>
<dbReference type="InterPro" id="IPR017927">
    <property type="entry name" value="FAD-bd_FR_type"/>
</dbReference>
<dbReference type="InterPro" id="IPR039261">
    <property type="entry name" value="FNR_nucleotide-bd"/>
</dbReference>
<dbReference type="InterPro" id="IPR010205">
    <property type="entry name" value="NqrF"/>
</dbReference>
<dbReference type="InterPro" id="IPR001433">
    <property type="entry name" value="OxRdtase_FAD/NAD-bd"/>
</dbReference>
<dbReference type="InterPro" id="IPR017938">
    <property type="entry name" value="Riboflavin_synthase-like_b-brl"/>
</dbReference>
<dbReference type="NCBIfam" id="TIGR01941">
    <property type="entry name" value="nqrF"/>
    <property type="match status" value="1"/>
</dbReference>
<dbReference type="PANTHER" id="PTHR43644">
    <property type="entry name" value="NA(+)-TRANSLOCATING NADH-QUINONE REDUCTASE SUBUNIT"/>
    <property type="match status" value="1"/>
</dbReference>
<dbReference type="PANTHER" id="PTHR43644:SF1">
    <property type="entry name" value="NAD(P)H-FLAVIN REDUCTASE"/>
    <property type="match status" value="1"/>
</dbReference>
<dbReference type="Pfam" id="PF00970">
    <property type="entry name" value="FAD_binding_6"/>
    <property type="match status" value="1"/>
</dbReference>
<dbReference type="Pfam" id="PF00175">
    <property type="entry name" value="NAD_binding_1"/>
    <property type="match status" value="1"/>
</dbReference>
<dbReference type="SUPFAM" id="SSF54292">
    <property type="entry name" value="2Fe-2S ferredoxin-like"/>
    <property type="match status" value="1"/>
</dbReference>
<dbReference type="SUPFAM" id="SSF52343">
    <property type="entry name" value="Ferredoxin reductase-like, C-terminal NADP-linked domain"/>
    <property type="match status" value="1"/>
</dbReference>
<dbReference type="SUPFAM" id="SSF63380">
    <property type="entry name" value="Riboflavin synthase domain-like"/>
    <property type="match status" value="1"/>
</dbReference>
<dbReference type="PROSITE" id="PS51384">
    <property type="entry name" value="FAD_FR"/>
    <property type="match status" value="1"/>
</dbReference>
<name>NQRF_COLMA</name>
<comment type="function">
    <text evidence="2">NQR complex catalyzes the reduction of ubiquinone-1 to ubiquinol by two successive reactions, coupled with the transport of Na(+) ions from the cytoplasm to the periplasm. The first step is catalyzed by NqrF, which accepts electrons from NADH and reduces ubiquinone-1 to ubisemiquinone by a one-electron transfer pathway.</text>
</comment>
<comment type="catalytic activity">
    <reaction evidence="2">
        <text>a ubiquinone + n Na(+)(in) + NADH + H(+) = a ubiquinol + n Na(+)(out) + NAD(+)</text>
        <dbReference type="Rhea" id="RHEA:47748"/>
        <dbReference type="Rhea" id="RHEA-COMP:9565"/>
        <dbReference type="Rhea" id="RHEA-COMP:9566"/>
        <dbReference type="ChEBI" id="CHEBI:15378"/>
        <dbReference type="ChEBI" id="CHEBI:16389"/>
        <dbReference type="ChEBI" id="CHEBI:17976"/>
        <dbReference type="ChEBI" id="CHEBI:29101"/>
        <dbReference type="ChEBI" id="CHEBI:57540"/>
        <dbReference type="ChEBI" id="CHEBI:57945"/>
        <dbReference type="EC" id="7.2.1.1"/>
    </reaction>
</comment>
<comment type="cofactor">
    <cofactor evidence="1">
        <name>[2Fe-2S] cluster</name>
        <dbReference type="ChEBI" id="CHEBI:190135"/>
    </cofactor>
    <text evidence="1">Binds 1 [2Fe-2S] cluster.</text>
</comment>
<comment type="cofactor">
    <cofactor evidence="1">
        <name>FAD</name>
        <dbReference type="ChEBI" id="CHEBI:57692"/>
    </cofactor>
</comment>
<comment type="subunit">
    <text evidence="2">Composed of six subunits; NqrA, NqrB, NqrC, NqrD, NqrE and NqrF.</text>
</comment>
<comment type="subcellular location">
    <subcellularLocation>
        <location evidence="5">Cell inner membrane</location>
    </subcellularLocation>
</comment>
<comment type="similarity">
    <text evidence="5">Belongs to the NqrF family.</text>
</comment>